<comment type="function">
    <text evidence="2">Plays a role in the inhibition of the host NF-kappa-B pathway. This inhibition occurs at the receptor level, by preventing the signaling of TNFR1 as well as IL-1R and TLR3.</text>
</comment>
<comment type="subunit">
    <text evidence="1 2">Interacts with host TNFRSF1A, RIPK1 and IRAK1; these interactions interfere with host NF-kappa-B activation at the level of receptor complexes (By similarity). Interacts with host protein UBQLN4 (By similarity).</text>
</comment>
<comment type="subcellular location">
    <subcellularLocation>
        <location evidence="2">Virion membrane</location>
        <topology evidence="2">Single-pass membrane protein</topology>
    </subcellularLocation>
    <subcellularLocation>
        <location evidence="2">Host cell membrane</location>
        <topology evidence="2">Single-pass membrane protein</topology>
    </subcellularLocation>
</comment>
<comment type="similarity">
    <text evidence="4">Belongs to the rubulavirus small hydrophobic protein family.</text>
</comment>
<organismHost>
    <name type="scientific">Homo sapiens</name>
    <name type="common">Human</name>
    <dbReference type="NCBI Taxonomy" id="9606"/>
</organismHost>
<feature type="chain" id="PRO_0000142884" description="Small hydrophobic protein">
    <location>
        <begin position="1"/>
        <end position="57"/>
    </location>
</feature>
<feature type="topological domain" description="Virion surface" evidence="3">
    <location>
        <begin position="1"/>
        <end position="8"/>
    </location>
</feature>
<feature type="transmembrane region" description="Helical" evidence="3">
    <location>
        <begin position="9"/>
        <end position="29"/>
    </location>
</feature>
<feature type="topological domain" description="Intravirion" evidence="3">
    <location>
        <begin position="30"/>
        <end position="57"/>
    </location>
</feature>
<proteinExistence type="inferred from homology"/>
<evidence type="ECO:0000250" key="1">
    <source>
        <dbReference type="UniProtKB" id="P22110"/>
    </source>
</evidence>
<evidence type="ECO:0000250" key="2">
    <source>
        <dbReference type="UniProtKB" id="P22112"/>
    </source>
</evidence>
<evidence type="ECO:0000255" key="3"/>
<evidence type="ECO:0000305" key="4"/>
<name>SH_MUMPT</name>
<dbReference type="EMBL" id="D90235">
    <property type="protein sequence ID" value="BAA14283.1"/>
    <property type="molecule type" value="Genomic_RNA"/>
</dbReference>
<dbReference type="PIR" id="JU0309">
    <property type="entry name" value="SHNZMT"/>
</dbReference>
<dbReference type="SMR" id="P22113"/>
<dbReference type="GO" id="GO:0020002">
    <property type="term" value="C:host cell plasma membrane"/>
    <property type="evidence" value="ECO:0007669"/>
    <property type="project" value="UniProtKB-SubCell"/>
</dbReference>
<dbReference type="GO" id="GO:0016020">
    <property type="term" value="C:membrane"/>
    <property type="evidence" value="ECO:0007669"/>
    <property type="project" value="UniProtKB-KW"/>
</dbReference>
<dbReference type="GO" id="GO:0055036">
    <property type="term" value="C:virion membrane"/>
    <property type="evidence" value="ECO:0007669"/>
    <property type="project" value="UniProtKB-SubCell"/>
</dbReference>
<dbReference type="GO" id="GO:0085034">
    <property type="term" value="P:symbiont-mediated suppression of host NF-kappaB cascade"/>
    <property type="evidence" value="ECO:0007669"/>
    <property type="project" value="UniProtKB-KW"/>
</dbReference>
<dbReference type="InterPro" id="IPR001477">
    <property type="entry name" value="SH"/>
</dbReference>
<dbReference type="Pfam" id="PF01445">
    <property type="entry name" value="SH"/>
    <property type="match status" value="1"/>
</dbReference>
<dbReference type="PIRSF" id="PIRSF003923">
    <property type="entry name" value="SH"/>
    <property type="match status" value="1"/>
</dbReference>
<protein>
    <recommendedName>
        <fullName>Small hydrophobic protein</fullName>
    </recommendedName>
</protein>
<organism>
    <name type="scientific">Mumps virus (strain Takahashi)</name>
    <name type="common">MuV</name>
    <dbReference type="NCBI Taxonomy" id="11174"/>
    <lineage>
        <taxon>Viruses</taxon>
        <taxon>Riboviria</taxon>
        <taxon>Orthornavirae</taxon>
        <taxon>Negarnaviricota</taxon>
        <taxon>Haploviricotina</taxon>
        <taxon>Monjiviricetes</taxon>
        <taxon>Mononegavirales</taxon>
        <taxon>Paramyxoviridae</taxon>
        <taxon>Rubulavirinae</taxon>
        <taxon>Orthorubulavirus</taxon>
        <taxon>Orthorubulavirus parotitidis</taxon>
        <taxon>Mumps orthorubulavirus</taxon>
    </lineage>
</organism>
<reference key="1">
    <citation type="submission" date="1990-11" db="EMBL/GenBank/DDBJ databases">
        <authorList>
            <person name="Takeuchi K."/>
        </authorList>
    </citation>
    <scope>NUCLEOTIDE SEQUENCE [GENOMIC RNA]</scope>
</reference>
<sequence>MPAIQPPLYPTFLLLILLSLIITLYAWIISTITYKTAMRHAALYQRSFFRWSFDHSL</sequence>
<gene>
    <name type="primary">SH</name>
</gene>
<keyword id="KW-1032">Host cell membrane</keyword>
<keyword id="KW-1043">Host membrane</keyword>
<keyword id="KW-0945">Host-virus interaction</keyword>
<keyword id="KW-1100">Inhibition of host NF-kappa-B by virus</keyword>
<keyword id="KW-0472">Membrane</keyword>
<keyword id="KW-0812">Transmembrane</keyword>
<keyword id="KW-1133">Transmembrane helix</keyword>
<keyword id="KW-0946">Virion</keyword>
<accession>P22113</accession>